<protein>
    <recommendedName>
        <fullName evidence="1">Exodeoxyribonuclease 7 small subunit</fullName>
        <ecNumber evidence="1">3.1.11.6</ecNumber>
    </recommendedName>
    <alternativeName>
        <fullName evidence="1">Exodeoxyribonuclease VII small subunit</fullName>
        <shortName evidence="1">Exonuclease VII small subunit</shortName>
    </alternativeName>
</protein>
<reference key="1">
    <citation type="journal article" date="2006" name="Appl. Environ. Microbiol.">
        <title>Genome sequence of the chemolithoautotrophic nitrite-oxidizing bacterium Nitrobacter winogradskyi Nb-255.</title>
        <authorList>
            <person name="Starkenburg S.R."/>
            <person name="Chain P.S.G."/>
            <person name="Sayavedra-Soto L.A."/>
            <person name="Hauser L."/>
            <person name="Land M.L."/>
            <person name="Larimer F.W."/>
            <person name="Malfatti S.A."/>
            <person name="Klotz M.G."/>
            <person name="Bottomley P.J."/>
            <person name="Arp D.J."/>
            <person name="Hickey W.J."/>
        </authorList>
    </citation>
    <scope>NUCLEOTIDE SEQUENCE [LARGE SCALE GENOMIC DNA]</scope>
    <source>
        <strain>ATCC 25391 / DSM 10237 / CIP 104748 / NCIMB 11846 / Nb-255</strain>
    </source>
</reference>
<keyword id="KW-0963">Cytoplasm</keyword>
<keyword id="KW-0269">Exonuclease</keyword>
<keyword id="KW-0378">Hydrolase</keyword>
<keyword id="KW-0540">Nuclease</keyword>
<keyword id="KW-1185">Reference proteome</keyword>
<evidence type="ECO:0000255" key="1">
    <source>
        <dbReference type="HAMAP-Rule" id="MF_00337"/>
    </source>
</evidence>
<dbReference type="EC" id="3.1.11.6" evidence="1"/>
<dbReference type="EMBL" id="CP000115">
    <property type="protein sequence ID" value="ABA03901.1"/>
    <property type="molecule type" value="Genomic_DNA"/>
</dbReference>
<dbReference type="RefSeq" id="WP_011313961.1">
    <property type="nucleotide sequence ID" value="NC_007406.1"/>
</dbReference>
<dbReference type="SMR" id="Q3SUZ0"/>
<dbReference type="STRING" id="323098.Nwi_0634"/>
<dbReference type="KEGG" id="nwi:Nwi_0634"/>
<dbReference type="eggNOG" id="COG1722">
    <property type="taxonomic scope" value="Bacteria"/>
</dbReference>
<dbReference type="HOGENOM" id="CLU_145918_0_3_5"/>
<dbReference type="OrthoDB" id="9808145at2"/>
<dbReference type="Proteomes" id="UP000002531">
    <property type="component" value="Chromosome"/>
</dbReference>
<dbReference type="GO" id="GO:0005829">
    <property type="term" value="C:cytosol"/>
    <property type="evidence" value="ECO:0007669"/>
    <property type="project" value="TreeGrafter"/>
</dbReference>
<dbReference type="GO" id="GO:0009318">
    <property type="term" value="C:exodeoxyribonuclease VII complex"/>
    <property type="evidence" value="ECO:0007669"/>
    <property type="project" value="InterPro"/>
</dbReference>
<dbReference type="GO" id="GO:0008855">
    <property type="term" value="F:exodeoxyribonuclease VII activity"/>
    <property type="evidence" value="ECO:0007669"/>
    <property type="project" value="UniProtKB-UniRule"/>
</dbReference>
<dbReference type="GO" id="GO:0006308">
    <property type="term" value="P:DNA catabolic process"/>
    <property type="evidence" value="ECO:0007669"/>
    <property type="project" value="UniProtKB-UniRule"/>
</dbReference>
<dbReference type="FunFam" id="1.10.287.1040:FF:000004">
    <property type="entry name" value="Exodeoxyribonuclease 7 small subunit"/>
    <property type="match status" value="1"/>
</dbReference>
<dbReference type="Gene3D" id="1.10.287.1040">
    <property type="entry name" value="Exonuclease VII, small subunit"/>
    <property type="match status" value="1"/>
</dbReference>
<dbReference type="HAMAP" id="MF_00337">
    <property type="entry name" value="Exonuc_7_S"/>
    <property type="match status" value="1"/>
</dbReference>
<dbReference type="InterPro" id="IPR003761">
    <property type="entry name" value="Exonuc_VII_S"/>
</dbReference>
<dbReference type="InterPro" id="IPR037004">
    <property type="entry name" value="Exonuc_VII_ssu_sf"/>
</dbReference>
<dbReference type="NCBIfam" id="NF002139">
    <property type="entry name" value="PRK00977.1-3"/>
    <property type="match status" value="1"/>
</dbReference>
<dbReference type="NCBIfam" id="TIGR01280">
    <property type="entry name" value="xseB"/>
    <property type="match status" value="1"/>
</dbReference>
<dbReference type="PANTHER" id="PTHR34137">
    <property type="entry name" value="EXODEOXYRIBONUCLEASE 7 SMALL SUBUNIT"/>
    <property type="match status" value="1"/>
</dbReference>
<dbReference type="PANTHER" id="PTHR34137:SF1">
    <property type="entry name" value="EXODEOXYRIBONUCLEASE 7 SMALL SUBUNIT"/>
    <property type="match status" value="1"/>
</dbReference>
<dbReference type="Pfam" id="PF02609">
    <property type="entry name" value="Exonuc_VII_S"/>
    <property type="match status" value="1"/>
</dbReference>
<dbReference type="PIRSF" id="PIRSF006488">
    <property type="entry name" value="Exonuc_VII_S"/>
    <property type="match status" value="1"/>
</dbReference>
<dbReference type="SUPFAM" id="SSF116842">
    <property type="entry name" value="XseB-like"/>
    <property type="match status" value="1"/>
</dbReference>
<gene>
    <name evidence="1" type="primary">xseB</name>
    <name type="ordered locus">Nwi_0634</name>
</gene>
<comment type="function">
    <text evidence="1">Bidirectionally degrades single-stranded DNA into large acid-insoluble oligonucleotides, which are then degraded further into small acid-soluble oligonucleotides.</text>
</comment>
<comment type="catalytic activity">
    <reaction evidence="1">
        <text>Exonucleolytic cleavage in either 5'- to 3'- or 3'- to 5'-direction to yield nucleoside 5'-phosphates.</text>
        <dbReference type="EC" id="3.1.11.6"/>
    </reaction>
</comment>
<comment type="subunit">
    <text evidence="1">Heterooligomer composed of large and small subunits.</text>
</comment>
<comment type="subcellular location">
    <subcellularLocation>
        <location evidence="1">Cytoplasm</location>
    </subcellularLocation>
</comment>
<comment type="similarity">
    <text evidence="1">Belongs to the XseB family.</text>
</comment>
<feature type="chain" id="PRO_0000303729" description="Exodeoxyribonuclease 7 small subunit">
    <location>
        <begin position="1"/>
        <end position="83"/>
    </location>
</feature>
<accession>Q3SUZ0</accession>
<organism>
    <name type="scientific">Nitrobacter winogradskyi (strain ATCC 25391 / DSM 10237 / CIP 104748 / NCIMB 11846 / Nb-255)</name>
    <dbReference type="NCBI Taxonomy" id="323098"/>
    <lineage>
        <taxon>Bacteria</taxon>
        <taxon>Pseudomonadati</taxon>
        <taxon>Pseudomonadota</taxon>
        <taxon>Alphaproteobacteria</taxon>
        <taxon>Hyphomicrobiales</taxon>
        <taxon>Nitrobacteraceae</taxon>
        <taxon>Nitrobacter</taxon>
    </lineage>
</organism>
<name>EX7S_NITWN</name>
<proteinExistence type="inferred from homology"/>
<sequence>MAENVPADVNTLSFELAIEELETIVKRLEDGKVALEESVAIYERGEALKRRCEELLRRAEARVEKITTDASGHVTGTEPLDVR</sequence>